<feature type="chain" id="PRO_1000016784" description="Queuine tRNA-ribosyltransferase">
    <location>
        <begin position="1"/>
        <end position="374"/>
    </location>
</feature>
<feature type="region of interest" description="RNA binding" evidence="1">
    <location>
        <begin position="249"/>
        <end position="255"/>
    </location>
</feature>
<feature type="region of interest" description="RNA binding; important for wobble base 34 recognition" evidence="1">
    <location>
        <begin position="273"/>
        <end position="277"/>
    </location>
</feature>
<feature type="active site" description="Proton acceptor" evidence="1">
    <location>
        <position position="94"/>
    </location>
</feature>
<feature type="active site" description="Nucleophile" evidence="1">
    <location>
        <position position="268"/>
    </location>
</feature>
<feature type="binding site" evidence="1">
    <location>
        <begin position="94"/>
        <end position="98"/>
    </location>
    <ligand>
        <name>substrate</name>
    </ligand>
</feature>
<feature type="binding site" evidence="1">
    <location>
        <position position="148"/>
    </location>
    <ligand>
        <name>substrate</name>
    </ligand>
</feature>
<feature type="binding site" evidence="1">
    <location>
        <position position="191"/>
    </location>
    <ligand>
        <name>substrate</name>
    </ligand>
</feature>
<feature type="binding site" evidence="1">
    <location>
        <position position="218"/>
    </location>
    <ligand>
        <name>substrate</name>
    </ligand>
</feature>
<feature type="binding site" evidence="1">
    <location>
        <position position="306"/>
    </location>
    <ligand>
        <name>Zn(2+)</name>
        <dbReference type="ChEBI" id="CHEBI:29105"/>
    </ligand>
</feature>
<feature type="binding site" evidence="1">
    <location>
        <position position="308"/>
    </location>
    <ligand>
        <name>Zn(2+)</name>
        <dbReference type="ChEBI" id="CHEBI:29105"/>
    </ligand>
</feature>
<feature type="binding site" evidence="1">
    <location>
        <position position="311"/>
    </location>
    <ligand>
        <name>Zn(2+)</name>
        <dbReference type="ChEBI" id="CHEBI:29105"/>
    </ligand>
</feature>
<feature type="binding site" evidence="1">
    <location>
        <position position="337"/>
    </location>
    <ligand>
        <name>Zn(2+)</name>
        <dbReference type="ChEBI" id="CHEBI:29105"/>
    </ligand>
</feature>
<protein>
    <recommendedName>
        <fullName evidence="1">Queuine tRNA-ribosyltransferase</fullName>
        <ecNumber evidence="1">2.4.2.29</ecNumber>
    </recommendedName>
    <alternativeName>
        <fullName evidence="1">Guanine insertion enzyme</fullName>
    </alternativeName>
    <alternativeName>
        <fullName evidence="1">tRNA-guanine transglycosylase</fullName>
    </alternativeName>
</protein>
<reference key="1">
    <citation type="submission" date="2007-02" db="EMBL/GenBank/DDBJ databases">
        <title>Complete sequence of Clostridium thermocellum ATCC 27405.</title>
        <authorList>
            <consortium name="US DOE Joint Genome Institute"/>
            <person name="Copeland A."/>
            <person name="Lucas S."/>
            <person name="Lapidus A."/>
            <person name="Barry K."/>
            <person name="Detter J.C."/>
            <person name="Glavina del Rio T."/>
            <person name="Hammon N."/>
            <person name="Israni S."/>
            <person name="Dalin E."/>
            <person name="Tice H."/>
            <person name="Pitluck S."/>
            <person name="Chertkov O."/>
            <person name="Brettin T."/>
            <person name="Bruce D."/>
            <person name="Han C."/>
            <person name="Tapia R."/>
            <person name="Gilna P."/>
            <person name="Schmutz J."/>
            <person name="Larimer F."/>
            <person name="Land M."/>
            <person name="Hauser L."/>
            <person name="Kyrpides N."/>
            <person name="Mikhailova N."/>
            <person name="Wu J.H.D."/>
            <person name="Newcomb M."/>
            <person name="Richardson P."/>
        </authorList>
    </citation>
    <scope>NUCLEOTIDE SEQUENCE [LARGE SCALE GENOMIC DNA]</scope>
    <source>
        <strain>ATCC 27405 / DSM 1237 / JCM 9322 / NBRC 103400 / NCIMB 10682 / NRRL B-4536 / VPI 7372</strain>
    </source>
</reference>
<dbReference type="EC" id="2.4.2.29" evidence="1"/>
<dbReference type="EMBL" id="CP000568">
    <property type="protein sequence ID" value="ABN52192.1"/>
    <property type="molecule type" value="Genomic_DNA"/>
</dbReference>
<dbReference type="RefSeq" id="WP_011837937.1">
    <property type="nucleotide sequence ID" value="NC_009012.1"/>
</dbReference>
<dbReference type="SMR" id="A3DE13"/>
<dbReference type="STRING" id="203119.Cthe_0958"/>
<dbReference type="GeneID" id="35804142"/>
<dbReference type="KEGG" id="cth:Cthe_0958"/>
<dbReference type="eggNOG" id="COG0343">
    <property type="taxonomic scope" value="Bacteria"/>
</dbReference>
<dbReference type="HOGENOM" id="CLU_022060_0_1_9"/>
<dbReference type="OrthoDB" id="9805417at2"/>
<dbReference type="UniPathway" id="UPA00392"/>
<dbReference type="Proteomes" id="UP000002145">
    <property type="component" value="Chromosome"/>
</dbReference>
<dbReference type="GO" id="GO:0005829">
    <property type="term" value="C:cytosol"/>
    <property type="evidence" value="ECO:0007669"/>
    <property type="project" value="TreeGrafter"/>
</dbReference>
<dbReference type="GO" id="GO:0046872">
    <property type="term" value="F:metal ion binding"/>
    <property type="evidence" value="ECO:0007669"/>
    <property type="project" value="UniProtKB-KW"/>
</dbReference>
<dbReference type="GO" id="GO:0008479">
    <property type="term" value="F:tRNA-guanosine(34) queuine transglycosylase activity"/>
    <property type="evidence" value="ECO:0007669"/>
    <property type="project" value="UniProtKB-UniRule"/>
</dbReference>
<dbReference type="GO" id="GO:0008616">
    <property type="term" value="P:queuosine biosynthetic process"/>
    <property type="evidence" value="ECO:0007669"/>
    <property type="project" value="UniProtKB-UniRule"/>
</dbReference>
<dbReference type="GO" id="GO:0002099">
    <property type="term" value="P:tRNA wobble guanine modification"/>
    <property type="evidence" value="ECO:0007669"/>
    <property type="project" value="TreeGrafter"/>
</dbReference>
<dbReference type="GO" id="GO:0101030">
    <property type="term" value="P:tRNA-guanine transglycosylation"/>
    <property type="evidence" value="ECO:0007669"/>
    <property type="project" value="InterPro"/>
</dbReference>
<dbReference type="FunFam" id="3.20.20.105:FF:000001">
    <property type="entry name" value="Queuine tRNA-ribosyltransferase"/>
    <property type="match status" value="1"/>
</dbReference>
<dbReference type="Gene3D" id="3.20.20.105">
    <property type="entry name" value="Queuine tRNA-ribosyltransferase-like"/>
    <property type="match status" value="1"/>
</dbReference>
<dbReference type="HAMAP" id="MF_00168">
    <property type="entry name" value="Q_tRNA_Tgt"/>
    <property type="match status" value="1"/>
</dbReference>
<dbReference type="InterPro" id="IPR050076">
    <property type="entry name" value="ArchSynthase1/Queuine_TRR"/>
</dbReference>
<dbReference type="InterPro" id="IPR004803">
    <property type="entry name" value="TGT"/>
</dbReference>
<dbReference type="InterPro" id="IPR036511">
    <property type="entry name" value="TGT-like_sf"/>
</dbReference>
<dbReference type="InterPro" id="IPR002616">
    <property type="entry name" value="tRNA_ribo_trans-like"/>
</dbReference>
<dbReference type="NCBIfam" id="TIGR00430">
    <property type="entry name" value="Q_tRNA_tgt"/>
    <property type="match status" value="1"/>
</dbReference>
<dbReference type="NCBIfam" id="TIGR00449">
    <property type="entry name" value="tgt_general"/>
    <property type="match status" value="1"/>
</dbReference>
<dbReference type="PANTHER" id="PTHR46499">
    <property type="entry name" value="QUEUINE TRNA-RIBOSYLTRANSFERASE"/>
    <property type="match status" value="1"/>
</dbReference>
<dbReference type="PANTHER" id="PTHR46499:SF1">
    <property type="entry name" value="QUEUINE TRNA-RIBOSYLTRANSFERASE"/>
    <property type="match status" value="1"/>
</dbReference>
<dbReference type="Pfam" id="PF01702">
    <property type="entry name" value="TGT"/>
    <property type="match status" value="1"/>
</dbReference>
<dbReference type="SUPFAM" id="SSF51713">
    <property type="entry name" value="tRNA-guanine transglycosylase"/>
    <property type="match status" value="1"/>
</dbReference>
<sequence>MSAIRYELIKKCKQSGARLGRVYTPHGCFDTPAFMPVGTQATVKGMSPDEMKEIEAQIILSNTYHLHMRPGEDIVKEAGGLHGFMNWDRPILTDSGGFQVFSLSDLRDIKEEGVTFKSHIDGSKHFISPEMAIKIQNDLGADIIMAFDECIPYPADYDYAKKSLERTTRWAKRCKDAHRNPEKQALFGIVQGGMYKDLRQQSAYELLELDFPGYAIGGLSVGEPAEIMYEMLEVTVPLLPEDKPRYLMGVGSPDYLIEGATRGIDMFDCVLPTRIGRNGTVLTSKGRIIVRDAIYARDYTPIDPECDCYACRNFTRAYIRHLLKSGEVLGIRLTTWHNLRFLINLMKKVRQAIMEDRLLDFRDEFFSKFGYKKI</sequence>
<keyword id="KW-0328">Glycosyltransferase</keyword>
<keyword id="KW-0479">Metal-binding</keyword>
<keyword id="KW-0671">Queuosine biosynthesis</keyword>
<keyword id="KW-1185">Reference proteome</keyword>
<keyword id="KW-0808">Transferase</keyword>
<keyword id="KW-0819">tRNA processing</keyword>
<keyword id="KW-0862">Zinc</keyword>
<accession>A3DE13</accession>
<name>TGT_ACET2</name>
<evidence type="ECO:0000255" key="1">
    <source>
        <dbReference type="HAMAP-Rule" id="MF_00168"/>
    </source>
</evidence>
<gene>
    <name evidence="1" type="primary">tgt</name>
    <name type="ordered locus">Cthe_0958</name>
</gene>
<comment type="function">
    <text evidence="1">Catalyzes the base-exchange of a guanine (G) residue with the queuine precursor 7-aminomethyl-7-deazaguanine (PreQ1) at position 34 (anticodon wobble position) in tRNAs with GU(N) anticodons (tRNA-Asp, -Asn, -His and -Tyr). Catalysis occurs through a double-displacement mechanism. The nucleophile active site attacks the C1' of nucleotide 34 to detach the guanine base from the RNA, forming a covalent enzyme-RNA intermediate. The proton acceptor active site deprotonates the incoming PreQ1, allowing a nucleophilic attack on the C1' of the ribose to form the product. After dissociation, two additional enzymatic reactions on the tRNA convert PreQ1 to queuine (Q), resulting in the hypermodified nucleoside queuosine (7-(((4,5-cis-dihydroxy-2-cyclopenten-1-yl)amino)methyl)-7-deazaguanosine).</text>
</comment>
<comment type="catalytic activity">
    <reaction evidence="1">
        <text>7-aminomethyl-7-carbaguanine + guanosine(34) in tRNA = 7-aminomethyl-7-carbaguanosine(34) in tRNA + guanine</text>
        <dbReference type="Rhea" id="RHEA:24104"/>
        <dbReference type="Rhea" id="RHEA-COMP:10341"/>
        <dbReference type="Rhea" id="RHEA-COMP:10342"/>
        <dbReference type="ChEBI" id="CHEBI:16235"/>
        <dbReference type="ChEBI" id="CHEBI:58703"/>
        <dbReference type="ChEBI" id="CHEBI:74269"/>
        <dbReference type="ChEBI" id="CHEBI:82833"/>
        <dbReference type="EC" id="2.4.2.29"/>
    </reaction>
</comment>
<comment type="cofactor">
    <cofactor evidence="1">
        <name>Zn(2+)</name>
        <dbReference type="ChEBI" id="CHEBI:29105"/>
    </cofactor>
    <text evidence="1">Binds 1 zinc ion per subunit.</text>
</comment>
<comment type="pathway">
    <text evidence="1">tRNA modification; tRNA-queuosine biosynthesis.</text>
</comment>
<comment type="subunit">
    <text evidence="1">Homodimer. Within each dimer, one monomer is responsible for RNA recognition and catalysis, while the other monomer binds to the replacement base PreQ1.</text>
</comment>
<comment type="similarity">
    <text evidence="1">Belongs to the queuine tRNA-ribosyltransferase family.</text>
</comment>
<proteinExistence type="inferred from homology"/>
<organism>
    <name type="scientific">Acetivibrio thermocellus (strain ATCC 27405 / DSM 1237 / JCM 9322 / NBRC 103400 / NCIMB 10682 / NRRL B-4536 / VPI 7372)</name>
    <name type="common">Clostridium thermocellum</name>
    <dbReference type="NCBI Taxonomy" id="203119"/>
    <lineage>
        <taxon>Bacteria</taxon>
        <taxon>Bacillati</taxon>
        <taxon>Bacillota</taxon>
        <taxon>Clostridia</taxon>
        <taxon>Eubacteriales</taxon>
        <taxon>Oscillospiraceae</taxon>
        <taxon>Acetivibrio</taxon>
    </lineage>
</organism>